<accession>P9WQF8</accession>
<accession>L0T946</accession>
<accession>P63431</accession>
<accession>Q11016</accession>
<feature type="chain" id="PRO_0000426783" description="Acyl-[acyl-carrier-protein] dehydrogenase MbtN">
    <location>
        <begin position="1"/>
        <end position="386"/>
    </location>
</feature>
<reference key="1">
    <citation type="journal article" date="2002" name="J. Bacteriol.">
        <title>Whole-genome comparison of Mycobacterium tuberculosis clinical and laboratory strains.</title>
        <authorList>
            <person name="Fleischmann R.D."/>
            <person name="Alland D."/>
            <person name="Eisen J.A."/>
            <person name="Carpenter L."/>
            <person name="White O."/>
            <person name="Peterson J.D."/>
            <person name="DeBoy R.T."/>
            <person name="Dodson R.J."/>
            <person name="Gwinn M.L."/>
            <person name="Haft D.H."/>
            <person name="Hickey E.K."/>
            <person name="Kolonay J.F."/>
            <person name="Nelson W.C."/>
            <person name="Umayam L.A."/>
            <person name="Ermolaeva M.D."/>
            <person name="Salzberg S.L."/>
            <person name="Delcher A."/>
            <person name="Utterback T.R."/>
            <person name="Weidman J.F."/>
            <person name="Khouri H.M."/>
            <person name="Gill J."/>
            <person name="Mikula A."/>
            <person name="Bishai W."/>
            <person name="Jacobs W.R. Jr."/>
            <person name="Venter J.C."/>
            <person name="Fraser C.M."/>
        </authorList>
    </citation>
    <scope>NUCLEOTIDE SEQUENCE [LARGE SCALE GENOMIC DNA]</scope>
    <source>
        <strain>CDC 1551 / Oshkosh</strain>
    </source>
</reference>
<protein>
    <recommendedName>
        <fullName>Acyl-[acyl-carrier-protein] dehydrogenase MbtN</fullName>
        <shortName>Acyl-ACP dehydrogenase MbtN</shortName>
        <ecNumber>1.3.99.-</ecNumber>
    </recommendedName>
    <alternativeName>
        <fullName>Mycobactin synthase protein N</fullName>
    </alternativeName>
</protein>
<gene>
    <name type="primary">mbtN</name>
    <name type="synonym">fadE14</name>
    <name type="ordered locus">MT1388</name>
</gene>
<evidence type="ECO:0000250" key="1"/>
<evidence type="ECO:0000305" key="2"/>
<keyword id="KW-0274">FAD</keyword>
<keyword id="KW-0285">Flavoprotein</keyword>
<keyword id="KW-0560">Oxidoreductase</keyword>
<keyword id="KW-1185">Reference proteome</keyword>
<organism>
    <name type="scientific">Mycobacterium tuberculosis (strain CDC 1551 / Oshkosh)</name>
    <dbReference type="NCBI Taxonomy" id="83331"/>
    <lineage>
        <taxon>Bacteria</taxon>
        <taxon>Bacillati</taxon>
        <taxon>Actinomycetota</taxon>
        <taxon>Actinomycetes</taxon>
        <taxon>Mycobacteriales</taxon>
        <taxon>Mycobacteriaceae</taxon>
        <taxon>Mycobacterium</taxon>
        <taxon>Mycobacterium tuberculosis complex</taxon>
    </lineage>
</organism>
<dbReference type="EC" id="1.3.99.-"/>
<dbReference type="EMBL" id="AE000516">
    <property type="protein sequence ID" value="AAK45652.1"/>
    <property type="molecule type" value="Genomic_DNA"/>
</dbReference>
<dbReference type="PIR" id="A70740">
    <property type="entry name" value="A70740"/>
</dbReference>
<dbReference type="RefSeq" id="WP_003406953.1">
    <property type="nucleotide sequence ID" value="NZ_KK341227.1"/>
</dbReference>
<dbReference type="SMR" id="P9WQF8"/>
<dbReference type="GeneID" id="45425324"/>
<dbReference type="KEGG" id="mtc:MT1388"/>
<dbReference type="PATRIC" id="fig|83331.31.peg.1496"/>
<dbReference type="HOGENOM" id="CLU_709451_0_0_11"/>
<dbReference type="UniPathway" id="UPA00011"/>
<dbReference type="Proteomes" id="UP000001020">
    <property type="component" value="Chromosome"/>
</dbReference>
<dbReference type="GO" id="GO:0005737">
    <property type="term" value="C:cytoplasm"/>
    <property type="evidence" value="ECO:0007669"/>
    <property type="project" value="TreeGrafter"/>
</dbReference>
<dbReference type="GO" id="GO:0003995">
    <property type="term" value="F:acyl-CoA dehydrogenase activity"/>
    <property type="evidence" value="ECO:0007669"/>
    <property type="project" value="TreeGrafter"/>
</dbReference>
<dbReference type="GO" id="GO:0050660">
    <property type="term" value="F:flavin adenine dinucleotide binding"/>
    <property type="evidence" value="ECO:0007669"/>
    <property type="project" value="InterPro"/>
</dbReference>
<dbReference type="GO" id="GO:0033539">
    <property type="term" value="P:fatty acid beta-oxidation using acyl-CoA dehydrogenase"/>
    <property type="evidence" value="ECO:0007669"/>
    <property type="project" value="TreeGrafter"/>
</dbReference>
<dbReference type="FunFam" id="2.40.110.10:FF:000033">
    <property type="entry name" value="Acyl-[acyl-carrier-protein] dehydrogenase MbtN"/>
    <property type="match status" value="1"/>
</dbReference>
<dbReference type="FunFam" id="1.20.140.10:FF:000039">
    <property type="entry name" value="Acyl-CoA dehydrogenase FadE14"/>
    <property type="match status" value="1"/>
</dbReference>
<dbReference type="Gene3D" id="1.10.540.10">
    <property type="entry name" value="Acyl-CoA dehydrogenase/oxidase, N-terminal domain"/>
    <property type="match status" value="1"/>
</dbReference>
<dbReference type="Gene3D" id="2.40.110.10">
    <property type="entry name" value="Butyryl-CoA Dehydrogenase, subunit A, domain 2"/>
    <property type="match status" value="1"/>
</dbReference>
<dbReference type="Gene3D" id="1.20.140.10">
    <property type="entry name" value="Butyryl-CoA Dehydrogenase, subunit A, domain 3"/>
    <property type="match status" value="1"/>
</dbReference>
<dbReference type="InterPro" id="IPR050741">
    <property type="entry name" value="Acyl-CoA_dehydrogenase"/>
</dbReference>
<dbReference type="InterPro" id="IPR006091">
    <property type="entry name" value="Acyl-CoA_Oxase/DH_mid-dom"/>
</dbReference>
<dbReference type="InterPro" id="IPR046373">
    <property type="entry name" value="Acyl-CoA_Oxase/DH_mid-dom_sf"/>
</dbReference>
<dbReference type="InterPro" id="IPR036250">
    <property type="entry name" value="AcylCo_DH-like_C"/>
</dbReference>
<dbReference type="InterPro" id="IPR009075">
    <property type="entry name" value="AcylCo_DH/oxidase_C"/>
</dbReference>
<dbReference type="InterPro" id="IPR013786">
    <property type="entry name" value="AcylCoA_DH/ox_N"/>
</dbReference>
<dbReference type="InterPro" id="IPR037069">
    <property type="entry name" value="AcylCoA_DH/ox_N_sf"/>
</dbReference>
<dbReference type="InterPro" id="IPR009100">
    <property type="entry name" value="AcylCoA_DH/oxidase_NM_dom_sf"/>
</dbReference>
<dbReference type="NCBIfam" id="NF037942">
    <property type="entry name" value="ac_ACP_DH_MbtN"/>
    <property type="match status" value="1"/>
</dbReference>
<dbReference type="PANTHER" id="PTHR48083:SF20">
    <property type="entry name" value="LONG-CHAIN SPECIFIC ACYL-COA DEHYDROGENASE, MITOCHONDRIAL"/>
    <property type="match status" value="1"/>
</dbReference>
<dbReference type="PANTHER" id="PTHR48083">
    <property type="entry name" value="MEDIUM-CHAIN SPECIFIC ACYL-COA DEHYDROGENASE, MITOCHONDRIAL-RELATED"/>
    <property type="match status" value="1"/>
</dbReference>
<dbReference type="Pfam" id="PF00441">
    <property type="entry name" value="Acyl-CoA_dh_1"/>
    <property type="match status" value="1"/>
</dbReference>
<dbReference type="Pfam" id="PF02770">
    <property type="entry name" value="Acyl-CoA_dh_M"/>
    <property type="match status" value="1"/>
</dbReference>
<dbReference type="Pfam" id="PF02771">
    <property type="entry name" value="Acyl-CoA_dh_N"/>
    <property type="match status" value="1"/>
</dbReference>
<dbReference type="SUPFAM" id="SSF47203">
    <property type="entry name" value="Acyl-CoA dehydrogenase C-terminal domain-like"/>
    <property type="match status" value="1"/>
</dbReference>
<dbReference type="SUPFAM" id="SSF56645">
    <property type="entry name" value="Acyl-CoA dehydrogenase NM domain-like"/>
    <property type="match status" value="1"/>
</dbReference>
<name>MBTN_MYCTO</name>
<proteinExistence type="inferred from homology"/>
<comment type="function">
    <text evidence="1">Catalyzes the dehydrogenation at the alpha-beta position of ACP-bound acyl chains. This results in the introduction of a double bond in the lipidic chain, which is further transferred to the epsilon-amino group of lysine residue in the mycobactin core by MbtK (By similarity).</text>
</comment>
<comment type="cofactor">
    <cofactor evidence="1">
        <name>FAD</name>
        <dbReference type="ChEBI" id="CHEBI:57692"/>
    </cofactor>
</comment>
<comment type="pathway">
    <text>Siderophore biosynthesis; mycobactin biosynthesis.</text>
</comment>
<comment type="similarity">
    <text evidence="2">Belongs to the acyl-CoA dehydrogenase family.</text>
</comment>
<sequence length="386" mass="41180">MTAGSDLDDFRGLLAKAFDERVVAWTAEAEAQERFPRQLIEHLGVCGVFDAKWATDARPDVGKLVELAFALGQLASAGIGVGVSLHDSAIAILRRFGKSDYLRDICDQAIRGAAVLCIGASEESGGSDLQIVETEIRSRDGGFEVRGVKKFVSLSPIADHIMVVARSVDHDPTSRHGNVAVVAVPAAQVSVQTPYRKVGAGPLDTAAVCIDTWVPADALVARAGTGLAAISWGLAHERMSIAGQIAASCQRAIGITLARMMSRRQFGQTLFEHQALRLRMADLQARVDLLRYALHGIAEQGRLELRTAAAVKVTAARLGEEVISECMHIFGGAGYLVDETTLGKWWRDMKLARVGGGTDEVLWELVAAGMTPDHDGYAAVVGASKA</sequence>